<reference key="1">
    <citation type="journal article" date="2008" name="J. Bacteriol.">
        <title>Complete genome sequence of Leuconostoc citreum KM20.</title>
        <authorList>
            <person name="Kim J.F."/>
            <person name="Jeong H."/>
            <person name="Lee J.-S."/>
            <person name="Choi S.-H."/>
            <person name="Ha M."/>
            <person name="Hur C.-G."/>
            <person name="Kim J.-S."/>
            <person name="Lee S."/>
            <person name="Park H.-S."/>
            <person name="Park Y.-H."/>
            <person name="Oh T.K."/>
        </authorList>
    </citation>
    <scope>NUCLEOTIDE SEQUENCE [LARGE SCALE GENOMIC DNA]</scope>
    <source>
        <strain>KM20</strain>
    </source>
</reference>
<dbReference type="EMBL" id="DQ489736">
    <property type="protein sequence ID" value="ACA82931.1"/>
    <property type="molecule type" value="Genomic_DNA"/>
</dbReference>
<dbReference type="RefSeq" id="WP_002815032.1">
    <property type="nucleotide sequence ID" value="NC_010471.1"/>
</dbReference>
<dbReference type="SMR" id="B1MZH9"/>
<dbReference type="STRING" id="349519.LCK_01104"/>
<dbReference type="GeneID" id="97503667"/>
<dbReference type="KEGG" id="lci:LCK_01104"/>
<dbReference type="eggNOG" id="COG0267">
    <property type="taxonomic scope" value="Bacteria"/>
</dbReference>
<dbReference type="HOGENOM" id="CLU_190949_3_2_9"/>
<dbReference type="OrthoDB" id="197660at2"/>
<dbReference type="Proteomes" id="UP000002166">
    <property type="component" value="Chromosome"/>
</dbReference>
<dbReference type="GO" id="GO:0005737">
    <property type="term" value="C:cytoplasm"/>
    <property type="evidence" value="ECO:0007669"/>
    <property type="project" value="UniProtKB-ARBA"/>
</dbReference>
<dbReference type="GO" id="GO:1990904">
    <property type="term" value="C:ribonucleoprotein complex"/>
    <property type="evidence" value="ECO:0007669"/>
    <property type="project" value="UniProtKB-KW"/>
</dbReference>
<dbReference type="GO" id="GO:0005840">
    <property type="term" value="C:ribosome"/>
    <property type="evidence" value="ECO:0007669"/>
    <property type="project" value="UniProtKB-KW"/>
</dbReference>
<dbReference type="GO" id="GO:0003735">
    <property type="term" value="F:structural constituent of ribosome"/>
    <property type="evidence" value="ECO:0007669"/>
    <property type="project" value="InterPro"/>
</dbReference>
<dbReference type="GO" id="GO:0006412">
    <property type="term" value="P:translation"/>
    <property type="evidence" value="ECO:0007669"/>
    <property type="project" value="UniProtKB-UniRule"/>
</dbReference>
<dbReference type="Gene3D" id="2.20.28.120">
    <property type="entry name" value="Ribosomal protein L33"/>
    <property type="match status" value="1"/>
</dbReference>
<dbReference type="HAMAP" id="MF_00294">
    <property type="entry name" value="Ribosomal_bL33"/>
    <property type="match status" value="1"/>
</dbReference>
<dbReference type="InterPro" id="IPR001705">
    <property type="entry name" value="Ribosomal_bL33"/>
</dbReference>
<dbReference type="InterPro" id="IPR018264">
    <property type="entry name" value="Ribosomal_bL33_CS"/>
</dbReference>
<dbReference type="InterPro" id="IPR038584">
    <property type="entry name" value="Ribosomal_bL33_sf"/>
</dbReference>
<dbReference type="InterPro" id="IPR011332">
    <property type="entry name" value="Ribosomal_zn-bd"/>
</dbReference>
<dbReference type="NCBIfam" id="NF001764">
    <property type="entry name" value="PRK00504.1"/>
    <property type="match status" value="1"/>
</dbReference>
<dbReference type="NCBIfam" id="NF001860">
    <property type="entry name" value="PRK00595.1"/>
    <property type="match status" value="1"/>
</dbReference>
<dbReference type="NCBIfam" id="TIGR01023">
    <property type="entry name" value="rpmG_bact"/>
    <property type="match status" value="1"/>
</dbReference>
<dbReference type="PANTHER" id="PTHR43168">
    <property type="entry name" value="50S RIBOSOMAL PROTEIN L33, CHLOROPLASTIC"/>
    <property type="match status" value="1"/>
</dbReference>
<dbReference type="PANTHER" id="PTHR43168:SF2">
    <property type="entry name" value="LARGE RIBOSOMAL SUBUNIT PROTEIN BL33C"/>
    <property type="match status" value="1"/>
</dbReference>
<dbReference type="Pfam" id="PF00471">
    <property type="entry name" value="Ribosomal_L33"/>
    <property type="match status" value="1"/>
</dbReference>
<dbReference type="SUPFAM" id="SSF57829">
    <property type="entry name" value="Zn-binding ribosomal proteins"/>
    <property type="match status" value="1"/>
</dbReference>
<dbReference type="PROSITE" id="PS00582">
    <property type="entry name" value="RIBOSOMAL_L33"/>
    <property type="match status" value="1"/>
</dbReference>
<keyword id="KW-1185">Reference proteome</keyword>
<keyword id="KW-0687">Ribonucleoprotein</keyword>
<keyword id="KW-0689">Ribosomal protein</keyword>
<accession>B1MZH9</accession>
<comment type="similarity">
    <text evidence="1">Belongs to the bacterial ribosomal protein bL33 family.</text>
</comment>
<proteinExistence type="inferred from homology"/>
<protein>
    <recommendedName>
        <fullName evidence="1">Large ribosomal subunit protein bL33</fullName>
    </recommendedName>
    <alternativeName>
        <fullName evidence="2">50S ribosomal protein L33</fullName>
    </alternativeName>
</protein>
<evidence type="ECO:0000255" key="1">
    <source>
        <dbReference type="HAMAP-Rule" id="MF_00294"/>
    </source>
</evidence>
<evidence type="ECO:0000305" key="2"/>
<feature type="chain" id="PRO_0000356527" description="Large ribosomal subunit protein bL33">
    <location>
        <begin position="1"/>
        <end position="49"/>
    </location>
</feature>
<organism>
    <name type="scientific">Leuconostoc citreum (strain KM20)</name>
    <dbReference type="NCBI Taxonomy" id="349519"/>
    <lineage>
        <taxon>Bacteria</taxon>
        <taxon>Bacillati</taxon>
        <taxon>Bacillota</taxon>
        <taxon>Bacilli</taxon>
        <taxon>Lactobacillales</taxon>
        <taxon>Lactobacillaceae</taxon>
        <taxon>Leuconostoc</taxon>
    </lineage>
</organism>
<name>RL33_LEUCK</name>
<gene>
    <name evidence="1" type="primary">rpmG</name>
    <name type="ordered locus">LCK_01104</name>
</gene>
<sequence>MRIHVVLGNDETGERIYLTSKNRRNTPDRLELKKYSPKLRKVVTFKEIK</sequence>